<feature type="chain" id="PRO_0000086074" description="Cyclin-dependent kinase D-1">
    <location>
        <begin position="1"/>
        <end position="424"/>
    </location>
</feature>
<feature type="domain" description="Protein kinase" evidence="2">
    <location>
        <begin position="19"/>
        <end position="299"/>
    </location>
</feature>
<feature type="region of interest" description="Disordered" evidence="4">
    <location>
        <begin position="303"/>
        <end position="337"/>
    </location>
</feature>
<feature type="region of interest" description="Disordered" evidence="4">
    <location>
        <begin position="359"/>
        <end position="424"/>
    </location>
</feature>
<feature type="compositionally biased region" description="Basic and acidic residues" evidence="4">
    <location>
        <begin position="359"/>
        <end position="374"/>
    </location>
</feature>
<feature type="active site" description="Proton acceptor" evidence="2 3">
    <location>
        <position position="141"/>
    </location>
</feature>
<feature type="binding site" evidence="2">
    <location>
        <begin position="25"/>
        <end position="33"/>
    </location>
    <ligand>
        <name>ATP</name>
        <dbReference type="ChEBI" id="CHEBI:30616"/>
    </ligand>
</feature>
<feature type="binding site" evidence="2">
    <location>
        <position position="48"/>
    </location>
    <ligand>
        <name>ATP</name>
        <dbReference type="ChEBI" id="CHEBI:30616"/>
    </ligand>
</feature>
<feature type="modified residue" description="Phosphothreonine" evidence="1">
    <location>
        <position position="29"/>
    </location>
</feature>
<feature type="modified residue" description="Phosphotyrosine" evidence="1">
    <location>
        <position position="30"/>
    </location>
</feature>
<feature type="modified residue" description="Phosphoserine" evidence="1">
    <location>
        <position position="168"/>
    </location>
</feature>
<feature type="modified residue" description="Phosphothreonine" evidence="1">
    <location>
        <position position="174"/>
    </location>
</feature>
<gene>
    <name type="primary">CDKD-1</name>
    <name type="synonym">R2</name>
    <name type="ordered locus">Os05g0392300</name>
    <name type="ordered locus">LOC_Os05g32600</name>
    <name type="ORF">OJ1764_D01.12</name>
</gene>
<accession>P29620</accession>
<accession>Q0DIF9</accession>
<accession>Q60ES0</accession>
<proteinExistence type="evidence at protein level"/>
<name>CDKD1_ORYSJ</name>
<dbReference type="EC" id="2.7.11.22"/>
<dbReference type="EC" id="2.7.11.23"/>
<dbReference type="EMBL" id="X58194">
    <property type="protein sequence ID" value="CAA41172.1"/>
    <property type="molecule type" value="mRNA"/>
</dbReference>
<dbReference type="EMBL" id="AC107085">
    <property type="protein sequence ID" value="AAV31263.1"/>
    <property type="status" value="ALT_SEQ"/>
    <property type="molecule type" value="Genomic_DNA"/>
</dbReference>
<dbReference type="EMBL" id="AP008211">
    <property type="protein sequence ID" value="BAF17364.1"/>
    <property type="molecule type" value="Genomic_DNA"/>
</dbReference>
<dbReference type="EMBL" id="AP014961">
    <property type="status" value="NOT_ANNOTATED_CDS"/>
    <property type="molecule type" value="Genomic_DNA"/>
</dbReference>
<dbReference type="PIR" id="S13934">
    <property type="entry name" value="S13934"/>
</dbReference>
<dbReference type="RefSeq" id="XP_015640677.1">
    <property type="nucleotide sequence ID" value="XM_015785191.1"/>
</dbReference>
<dbReference type="SMR" id="P29620"/>
<dbReference type="FunCoup" id="P29620">
    <property type="interactions" value="2048"/>
</dbReference>
<dbReference type="STRING" id="39947.P29620"/>
<dbReference type="PaxDb" id="39947-P29620"/>
<dbReference type="KEGG" id="dosa:Os05g0392300"/>
<dbReference type="eggNOG" id="KOG0659">
    <property type="taxonomic scope" value="Eukaryota"/>
</dbReference>
<dbReference type="HOGENOM" id="CLU_114282_0_0_1"/>
<dbReference type="InParanoid" id="P29620"/>
<dbReference type="OrthoDB" id="1732493at2759"/>
<dbReference type="PlantReactome" id="R-OSA-9640760">
    <property type="pathway name" value="G1 phase"/>
</dbReference>
<dbReference type="Proteomes" id="UP000000763">
    <property type="component" value="Chromosome 5"/>
</dbReference>
<dbReference type="Proteomes" id="UP000059680">
    <property type="component" value="Chromosome 5"/>
</dbReference>
<dbReference type="GO" id="GO:0005737">
    <property type="term" value="C:cytoplasm"/>
    <property type="evidence" value="ECO:0000318"/>
    <property type="project" value="GO_Central"/>
</dbReference>
<dbReference type="GO" id="GO:0005634">
    <property type="term" value="C:nucleus"/>
    <property type="evidence" value="ECO:0000318"/>
    <property type="project" value="GO_Central"/>
</dbReference>
<dbReference type="GO" id="GO:0070985">
    <property type="term" value="C:transcription factor TFIIK complex"/>
    <property type="evidence" value="ECO:0000318"/>
    <property type="project" value="GO_Central"/>
</dbReference>
<dbReference type="GO" id="GO:0005524">
    <property type="term" value="F:ATP binding"/>
    <property type="evidence" value="ECO:0007669"/>
    <property type="project" value="UniProtKB-KW"/>
</dbReference>
<dbReference type="GO" id="GO:0004693">
    <property type="term" value="F:cyclin-dependent protein serine/threonine kinase activity"/>
    <property type="evidence" value="ECO:0000318"/>
    <property type="project" value="GO_Central"/>
</dbReference>
<dbReference type="GO" id="GO:0106310">
    <property type="term" value="F:protein serine kinase activity"/>
    <property type="evidence" value="ECO:0007669"/>
    <property type="project" value="RHEA"/>
</dbReference>
<dbReference type="GO" id="GO:0008353">
    <property type="term" value="F:RNA polymerase II CTD heptapeptide repeat kinase activity"/>
    <property type="evidence" value="ECO:0000318"/>
    <property type="project" value="GO_Central"/>
</dbReference>
<dbReference type="GO" id="GO:0051301">
    <property type="term" value="P:cell division"/>
    <property type="evidence" value="ECO:0007669"/>
    <property type="project" value="UniProtKB-KW"/>
</dbReference>
<dbReference type="GO" id="GO:0045944">
    <property type="term" value="P:positive regulation of transcription by RNA polymerase II"/>
    <property type="evidence" value="ECO:0000318"/>
    <property type="project" value="GO_Central"/>
</dbReference>
<dbReference type="GO" id="GO:0051726">
    <property type="term" value="P:regulation of cell cycle"/>
    <property type="evidence" value="ECO:0000318"/>
    <property type="project" value="GO_Central"/>
</dbReference>
<dbReference type="CDD" id="cd07841">
    <property type="entry name" value="STKc_CDK7"/>
    <property type="match status" value="1"/>
</dbReference>
<dbReference type="FunFam" id="3.30.200.20:FF:000289">
    <property type="entry name" value="Cyclin-dependent kinase D-1"/>
    <property type="match status" value="1"/>
</dbReference>
<dbReference type="FunFam" id="1.10.510.10:FF:000097">
    <property type="entry name" value="Putative cyclin-dependent kinase 7"/>
    <property type="match status" value="1"/>
</dbReference>
<dbReference type="Gene3D" id="3.30.200.20">
    <property type="entry name" value="Phosphorylase Kinase, domain 1"/>
    <property type="match status" value="1"/>
</dbReference>
<dbReference type="Gene3D" id="1.10.510.10">
    <property type="entry name" value="Transferase(Phosphotransferase) domain 1"/>
    <property type="match status" value="1"/>
</dbReference>
<dbReference type="InterPro" id="IPR050108">
    <property type="entry name" value="CDK"/>
</dbReference>
<dbReference type="InterPro" id="IPR037770">
    <property type="entry name" value="CDK7"/>
</dbReference>
<dbReference type="InterPro" id="IPR011009">
    <property type="entry name" value="Kinase-like_dom_sf"/>
</dbReference>
<dbReference type="InterPro" id="IPR000719">
    <property type="entry name" value="Prot_kinase_dom"/>
</dbReference>
<dbReference type="InterPro" id="IPR017441">
    <property type="entry name" value="Protein_kinase_ATP_BS"/>
</dbReference>
<dbReference type="InterPro" id="IPR008271">
    <property type="entry name" value="Ser/Thr_kinase_AS"/>
</dbReference>
<dbReference type="PANTHER" id="PTHR24056">
    <property type="entry name" value="CELL DIVISION PROTEIN KINASE"/>
    <property type="match status" value="1"/>
</dbReference>
<dbReference type="PANTHER" id="PTHR24056:SF0">
    <property type="entry name" value="CYCLIN-DEPENDENT KINASE 7"/>
    <property type="match status" value="1"/>
</dbReference>
<dbReference type="Pfam" id="PF00069">
    <property type="entry name" value="Pkinase"/>
    <property type="match status" value="1"/>
</dbReference>
<dbReference type="SMART" id="SM00220">
    <property type="entry name" value="S_TKc"/>
    <property type="match status" value="1"/>
</dbReference>
<dbReference type="SUPFAM" id="SSF56112">
    <property type="entry name" value="Protein kinase-like (PK-like)"/>
    <property type="match status" value="1"/>
</dbReference>
<dbReference type="PROSITE" id="PS00107">
    <property type="entry name" value="PROTEIN_KINASE_ATP"/>
    <property type="match status" value="1"/>
</dbReference>
<dbReference type="PROSITE" id="PS50011">
    <property type="entry name" value="PROTEIN_KINASE_DOM"/>
    <property type="match status" value="1"/>
</dbReference>
<dbReference type="PROSITE" id="PS00108">
    <property type="entry name" value="PROTEIN_KINASE_ST"/>
    <property type="match status" value="1"/>
</dbReference>
<reference key="1">
    <citation type="journal article" date="1991" name="FEBS Lett.">
        <title>cDNA cloning of a novel cdc2+/CDC28-related protein kinase from rice.</title>
        <authorList>
            <person name="Hata S."/>
        </authorList>
    </citation>
    <scope>NUCLEOTIDE SEQUENCE [MRNA]</scope>
    <source>
        <strain>cv. Nipponbare</strain>
    </source>
</reference>
<reference key="2">
    <citation type="journal article" date="2005" name="Mol. Genet. Genomics">
        <title>A fine physical map of the rice chromosome 5.</title>
        <authorList>
            <person name="Cheng C.-H."/>
            <person name="Chung M.C."/>
            <person name="Liu S.-M."/>
            <person name="Chen S.-K."/>
            <person name="Kao F.Y."/>
            <person name="Lin S.-J."/>
            <person name="Hsiao S.-H."/>
            <person name="Tseng I.C."/>
            <person name="Hsing Y.-I.C."/>
            <person name="Wu H.-P."/>
            <person name="Chen C.-S."/>
            <person name="Shaw J.-F."/>
            <person name="Wu J."/>
            <person name="Matsumoto T."/>
            <person name="Sasaki T."/>
            <person name="Chen H.-C."/>
            <person name="Chow T.-Y."/>
        </authorList>
    </citation>
    <scope>NUCLEOTIDE SEQUENCE [LARGE SCALE GENOMIC DNA]</scope>
    <source>
        <strain>cv. Nipponbare</strain>
    </source>
</reference>
<reference key="3">
    <citation type="journal article" date="2005" name="Nature">
        <title>The map-based sequence of the rice genome.</title>
        <authorList>
            <consortium name="International rice genome sequencing project (IRGSP)"/>
        </authorList>
    </citation>
    <scope>NUCLEOTIDE SEQUENCE [LARGE SCALE GENOMIC DNA]</scope>
    <source>
        <strain>cv. Nipponbare</strain>
    </source>
</reference>
<reference key="4">
    <citation type="journal article" date="2008" name="Nucleic Acids Res.">
        <title>The rice annotation project database (RAP-DB): 2008 update.</title>
        <authorList>
            <consortium name="The rice annotation project (RAP)"/>
        </authorList>
    </citation>
    <scope>GENOME REANNOTATION</scope>
    <source>
        <strain>cv. Nipponbare</strain>
    </source>
</reference>
<reference key="5">
    <citation type="journal article" date="2013" name="Rice">
        <title>Improvement of the Oryza sativa Nipponbare reference genome using next generation sequence and optical map data.</title>
        <authorList>
            <person name="Kawahara Y."/>
            <person name="de la Bastide M."/>
            <person name="Hamilton J.P."/>
            <person name="Kanamori H."/>
            <person name="McCombie W.R."/>
            <person name="Ouyang S."/>
            <person name="Schwartz D.C."/>
            <person name="Tanaka T."/>
            <person name="Wu J."/>
            <person name="Zhou S."/>
            <person name="Childs K.L."/>
            <person name="Davidson R.M."/>
            <person name="Lin H."/>
            <person name="Quesada-Ocampo L."/>
            <person name="Vaillancourt B."/>
            <person name="Sakai H."/>
            <person name="Lee S.S."/>
            <person name="Kim J."/>
            <person name="Numa H."/>
            <person name="Itoh T."/>
            <person name="Buell C.R."/>
            <person name="Matsumoto T."/>
        </authorList>
    </citation>
    <scope>GENOME REANNOTATION</scope>
    <source>
        <strain>cv. Nipponbare</strain>
    </source>
</reference>
<reference key="6">
    <citation type="journal article" date="1997" name="Plant J.">
        <title>Differential expression of a CAK (cdc2-activating kinase)-like protein kinase, cyclins and cdc2 genes from rice during the cell cycle and in response to gibberellin.</title>
        <authorList>
            <person name="Sauter M."/>
        </authorList>
    </citation>
    <scope>TISSUE SPECIFICITY</scope>
    <scope>DEVELOPMENTAL STAGE</scope>
    <scope>INDUCTION</scope>
</reference>
<reference key="7">
    <citation type="journal article" date="1998" name="Plant J.">
        <title>A rice homolog of Cdk7/MO15 phosphorylates both cyclin-dependent protein kinases and the carboxy-terminal domain of RNA polymerase II.</title>
        <authorList>
            <person name="Yamaguchi M."/>
            <person name="Umeda M."/>
            <person name="Uchimiya H."/>
        </authorList>
    </citation>
    <scope>FUNCTION</scope>
</reference>
<reference key="8">
    <citation type="journal article" date="1999" name="Plant Physiol.">
        <title>Adventitious root growth and cell-cycle induction in deepwater rice.</title>
        <authorList>
            <person name="Lorbiecke R."/>
            <person name="Sauter M."/>
        </authorList>
    </citation>
    <scope>INDUCTION</scope>
</reference>
<reference key="9">
    <citation type="journal article" date="1999" name="Plant Physiol.">
        <title>Differential expression of genes for cyclin-dependent protein kinases in rice plants.</title>
        <authorList>
            <person name="Umeda M."/>
            <person name="Umeda-Hara C."/>
            <person name="Yamaguchi M."/>
            <person name="Hashimoto J."/>
            <person name="Uchimiya H."/>
        </authorList>
    </citation>
    <scope>TISSUE SPECIFICITY</scope>
</reference>
<reference key="10">
    <citation type="journal article" date="2000" name="Plant J.">
        <title>Activation of CDK-activating kinase is dependent on interaction with H-type cyclins in plants.</title>
        <authorList>
            <person name="Yamaguchi M."/>
            <person name="Fabian T."/>
            <person name="Sauter M."/>
            <person name="Bhalerao R.P."/>
            <person name="Schrader J."/>
            <person name="Sandberg G."/>
            <person name="Umeda M."/>
            <person name="Uchimiya H."/>
        </authorList>
    </citation>
    <scope>FUNCTION</scope>
    <scope>TISSUE SPECIFICITY</scope>
    <scope>INTERACTION WITH CYCH1-1</scope>
</reference>
<reference key="11">
    <citation type="journal article" date="2002" name="Plant Cell">
        <title>The rice cyclin-dependent kinase-activating kinase R2 regulates S-phase progression.</title>
        <authorList>
            <person name="Fabian-Marwedel T."/>
            <person name="Umeda M."/>
            <person name="Sauter M."/>
        </authorList>
    </citation>
    <scope>FUNCTION</scope>
    <scope>SUBCELLULAR LOCATION</scope>
    <scope>TISSUE SPECIFICITY</scope>
    <scope>DEVELOPMENTAL STAGE</scope>
    <scope>INDUCTION</scope>
</reference>
<reference key="12">
    <citation type="journal article" date="2003" name="Proc. Natl. Acad. Sci. U.S.A.">
        <title>Control of in vitro organogenesis by cyclin-dependent kinase activities in plants.</title>
        <authorList>
            <person name="Yamaguchi M."/>
            <person name="Kato H."/>
            <person name="Yoshida S."/>
            <person name="Yamamura S."/>
            <person name="Uchimiya H."/>
            <person name="Umeda M."/>
        </authorList>
    </citation>
    <scope>FUNCTION</scope>
</reference>
<reference key="13">
    <citation type="journal article" date="2007" name="Plant Mol. Biol.">
        <title>Genome-wide identification and expression analysis of rice cell cycle genes.</title>
        <authorList>
            <person name="Guo J."/>
            <person name="Song J."/>
            <person name="Wang F."/>
            <person name="Zhang X.S."/>
        </authorList>
    </citation>
    <scope>INDUCTION AND GENE FAMILY</scope>
</reference>
<organism>
    <name type="scientific">Oryza sativa subsp. japonica</name>
    <name type="common">Rice</name>
    <dbReference type="NCBI Taxonomy" id="39947"/>
    <lineage>
        <taxon>Eukaryota</taxon>
        <taxon>Viridiplantae</taxon>
        <taxon>Streptophyta</taxon>
        <taxon>Embryophyta</taxon>
        <taxon>Tracheophyta</taxon>
        <taxon>Spermatophyta</taxon>
        <taxon>Magnoliopsida</taxon>
        <taxon>Liliopsida</taxon>
        <taxon>Poales</taxon>
        <taxon>Poaceae</taxon>
        <taxon>BOP clade</taxon>
        <taxon>Oryzoideae</taxon>
        <taxon>Oryzeae</taxon>
        <taxon>Oryzinae</taxon>
        <taxon>Oryza</taxon>
        <taxon>Oryza sativa</taxon>
    </lineage>
</organism>
<evidence type="ECO:0000250" key="1"/>
<evidence type="ECO:0000255" key="2">
    <source>
        <dbReference type="PROSITE-ProRule" id="PRU00159"/>
    </source>
</evidence>
<evidence type="ECO:0000255" key="3">
    <source>
        <dbReference type="PROSITE-ProRule" id="PRU10027"/>
    </source>
</evidence>
<evidence type="ECO:0000256" key="4">
    <source>
        <dbReference type="SAM" id="MobiDB-lite"/>
    </source>
</evidence>
<evidence type="ECO:0000269" key="5">
    <source>
    </source>
</evidence>
<evidence type="ECO:0000269" key="6">
    <source>
    </source>
</evidence>
<evidence type="ECO:0000269" key="7">
    <source>
    </source>
</evidence>
<evidence type="ECO:0000269" key="8">
    <source>
    </source>
</evidence>
<evidence type="ECO:0000269" key="9">
    <source>
    </source>
</evidence>
<evidence type="ECO:0000269" key="10">
    <source>
    </source>
</evidence>
<evidence type="ECO:0000269" key="11">
    <source>
    </source>
</evidence>
<evidence type="ECO:0000269" key="12">
    <source>
    </source>
</evidence>
<evidence type="ECO:0000305" key="13"/>
<keyword id="KW-0067">ATP-binding</keyword>
<keyword id="KW-0131">Cell cycle</keyword>
<keyword id="KW-0132">Cell division</keyword>
<keyword id="KW-0418">Kinase</keyword>
<keyword id="KW-0547">Nucleotide-binding</keyword>
<keyword id="KW-0539">Nucleus</keyword>
<keyword id="KW-0597">Phosphoprotein</keyword>
<keyword id="KW-1185">Reference proteome</keyword>
<keyword id="KW-0723">Serine/threonine-protein kinase</keyword>
<keyword id="KW-0808">Transferase</keyword>
<protein>
    <recommendedName>
        <fullName>Cyclin-dependent kinase D-1</fullName>
        <shortName>CDKD;1</shortName>
        <ecNumber>2.7.11.22</ecNumber>
        <ecNumber>2.7.11.23</ecNumber>
    </recommendedName>
    <alternativeName>
        <fullName>CDC2+/CDC28-related protein kinase R2</fullName>
    </alternativeName>
    <alternativeName>
        <fullName>CDK-activating kinase R2</fullName>
        <shortName>CAK-R2</shortName>
    </alternativeName>
</protein>
<sequence>MASGDGGDDAGVKRVADRYLKREVLGEGTYGVVFKAVDTKTGNTVAIKKIRLGKYKEGVNFTALREIKLLKELKDSNIIELIDAFPYKGNLHLVFEFMETDLEAVIRDRNIVLSPADTKSYIQMMLKGLAFCHKKWVLHRDMKPNNLLIGADGQLKLADFGLARIFGSPERNFTHQVFARWYRAPELLFGTKQYGSAVDIWAAGCIFAELLLRRPFLQGSSDIDQLGKIFAAFGTPKSSQWPDMVYLPDYVEYQFVSAPPLRSLFPMASDDALDLLSRMFTYDPKARITAQQALEHRYFLSVPAPTKPSQLPRPPPKGDSGNNKIPDLNLQDGPVVLSPPRKLRRVTAHEGMEVHMHRADRTEEHPSGARHMDDMSSQSSRIPMSVDVGAIFGTRPAPRPTLNSADKSRLKRKLDMDPEFGYTE</sequence>
<comment type="function">
    <text evidence="5 6 7 8">CDK-activating kinase that may control G1/S phase progression. May control the rate of cell differentiation to accomplish proper development of organs, or in response to a changing environment. Forms a complex with cyclin CYCH1-1 that phosphorylates CDKA-1 and the C-terminal domain (CTD) of the large subunit of RNA polymerase II.</text>
</comment>
<comment type="catalytic activity">
    <reaction>
        <text>L-seryl-[protein] + ATP = O-phospho-L-seryl-[protein] + ADP + H(+)</text>
        <dbReference type="Rhea" id="RHEA:17989"/>
        <dbReference type="Rhea" id="RHEA-COMP:9863"/>
        <dbReference type="Rhea" id="RHEA-COMP:11604"/>
        <dbReference type="ChEBI" id="CHEBI:15378"/>
        <dbReference type="ChEBI" id="CHEBI:29999"/>
        <dbReference type="ChEBI" id="CHEBI:30616"/>
        <dbReference type="ChEBI" id="CHEBI:83421"/>
        <dbReference type="ChEBI" id="CHEBI:456216"/>
        <dbReference type="EC" id="2.7.11.22"/>
    </reaction>
</comment>
<comment type="catalytic activity">
    <reaction>
        <text>L-threonyl-[protein] + ATP = O-phospho-L-threonyl-[protein] + ADP + H(+)</text>
        <dbReference type="Rhea" id="RHEA:46608"/>
        <dbReference type="Rhea" id="RHEA-COMP:11060"/>
        <dbReference type="Rhea" id="RHEA-COMP:11605"/>
        <dbReference type="ChEBI" id="CHEBI:15378"/>
        <dbReference type="ChEBI" id="CHEBI:30013"/>
        <dbReference type="ChEBI" id="CHEBI:30616"/>
        <dbReference type="ChEBI" id="CHEBI:61977"/>
        <dbReference type="ChEBI" id="CHEBI:456216"/>
        <dbReference type="EC" id="2.7.11.22"/>
    </reaction>
</comment>
<comment type="catalytic activity">
    <reaction>
        <text>[DNA-directed RNA polymerase] + ATP = phospho-[DNA-directed RNA polymerase] + ADP + H(+)</text>
        <dbReference type="Rhea" id="RHEA:10216"/>
        <dbReference type="Rhea" id="RHEA-COMP:11321"/>
        <dbReference type="Rhea" id="RHEA-COMP:11322"/>
        <dbReference type="ChEBI" id="CHEBI:15378"/>
        <dbReference type="ChEBI" id="CHEBI:30616"/>
        <dbReference type="ChEBI" id="CHEBI:43176"/>
        <dbReference type="ChEBI" id="CHEBI:68546"/>
        <dbReference type="ChEBI" id="CHEBI:456216"/>
        <dbReference type="EC" id="2.7.11.23"/>
    </reaction>
</comment>
<comment type="subunit">
    <text evidence="6">Interacts with CYCH1-1.</text>
</comment>
<comment type="subcellular location">
    <subcellularLocation>
        <location evidence="7">Nucleus</location>
    </subcellularLocation>
</comment>
<comment type="tissue specificity">
    <text evidence="6 7 10 12">Expressed in actively dividing cells of roots, leaves and shoots. Expressed in the intercalary meristem and the elongation zone of internodes.</text>
</comment>
<comment type="developmental stage">
    <text evidence="7 10">Expression reaches a peak in the G1/S phases and then decreases in the G2/M phases.</text>
</comment>
<comment type="induction">
    <text evidence="7 9 10 11">By gibberellic acid (GA3) and submergence in the meristematic zone of internodes. Down-regulated by auxin.</text>
</comment>
<comment type="similarity">
    <text evidence="13">Belongs to the protein kinase superfamily. CMGC Ser/Thr protein kinase family. CDC2/CDKX subfamily.</text>
</comment>
<comment type="sequence caution" evidence="13">
    <conflict type="erroneous gene model prediction">
        <sequence resource="EMBL-CDS" id="AAV31263"/>
    </conflict>
</comment>